<reference key="1">
    <citation type="journal article" date="2003" name="Genome Res.">
        <title>Genome sequence of an M3 strain of Streptococcus pyogenes reveals a large-scale genomic rearrangement in invasive strains and new insights into phage evolution.</title>
        <authorList>
            <person name="Nakagawa I."/>
            <person name="Kurokawa K."/>
            <person name="Yamashita A."/>
            <person name="Nakata M."/>
            <person name="Tomiyasu Y."/>
            <person name="Okahashi N."/>
            <person name="Kawabata S."/>
            <person name="Yamazaki K."/>
            <person name="Shiba T."/>
            <person name="Yasunaga T."/>
            <person name="Hayashi H."/>
            <person name="Hattori M."/>
            <person name="Hamada S."/>
        </authorList>
    </citation>
    <scope>NUCLEOTIDE SEQUENCE [LARGE SCALE GENOMIC DNA]</scope>
    <source>
        <strain>SSI-1</strain>
    </source>
</reference>
<name>SYE_STRPQ</name>
<organism>
    <name type="scientific">Streptococcus pyogenes serotype M3 (strain SSI-1)</name>
    <dbReference type="NCBI Taxonomy" id="193567"/>
    <lineage>
        <taxon>Bacteria</taxon>
        <taxon>Bacillati</taxon>
        <taxon>Bacillota</taxon>
        <taxon>Bacilli</taxon>
        <taxon>Lactobacillales</taxon>
        <taxon>Streptococcaceae</taxon>
        <taxon>Streptococcus</taxon>
    </lineage>
</organism>
<protein>
    <recommendedName>
        <fullName evidence="1">Glutamate--tRNA ligase</fullName>
        <ecNumber evidence="1">6.1.1.17</ecNumber>
    </recommendedName>
    <alternativeName>
        <fullName evidence="1">Glutamyl-tRNA synthetase</fullName>
        <shortName evidence="1">GluRS</shortName>
    </alternativeName>
</protein>
<feature type="chain" id="PRO_0000411607" description="Glutamate--tRNA ligase">
    <location>
        <begin position="1"/>
        <end position="481"/>
    </location>
</feature>
<feature type="short sequence motif" description="'HIGH' region" evidence="1">
    <location>
        <begin position="11"/>
        <end position="21"/>
    </location>
</feature>
<feature type="short sequence motif" description="'KMSKS' region" evidence="1">
    <location>
        <begin position="255"/>
        <end position="259"/>
    </location>
</feature>
<feature type="binding site" evidence="1">
    <location>
        <position position="258"/>
    </location>
    <ligand>
        <name>ATP</name>
        <dbReference type="ChEBI" id="CHEBI:30616"/>
    </ligand>
</feature>
<evidence type="ECO:0000255" key="1">
    <source>
        <dbReference type="HAMAP-Rule" id="MF_00022"/>
    </source>
</evidence>
<proteinExistence type="inferred from homology"/>
<sequence>MSKPIRVRYAPSPTGLLHIGNARTALFNYLYARRHGGTFIIRIEDTDRKRHVEDGERSQLENLKWLGMDWDESPETHENYRQSERLALYQQYIDQLLAEGKAYKSYVTEEELAAERERQEAAGETPRYINEFIGMSADEKAKYIAEREAAGIVPTVRLAVNESGIYKWADMVKGDIEFEGGNIGGDWVIQKKDGYPTYNFAVVVDDHDMQISHVIRGDDHIANTPKQLMVYEALGWEAPEFGHMTLIINSETGKKLSKRDTNTLQFIEDYRKKGYMPEAVFNFIALLGWNPGGEEEIFSREQLIALFDENRLSKSPAAFDQKKMDWMSNEYLKHADFETVYALCKPFLEEAGRLTEKAEKLVELYKPQLKSADEIIPLTDLFFSDFPELTEAEKEVMAGETVSTVLQAFKAKLEAMSDEDFKPENIFPQIKAVQKETGIKGKNLFMPIRIAVSGEMHGPELPNTIYLLGRDKSIEHIKNML</sequence>
<keyword id="KW-0030">Aminoacyl-tRNA synthetase</keyword>
<keyword id="KW-0067">ATP-binding</keyword>
<keyword id="KW-0963">Cytoplasm</keyword>
<keyword id="KW-0436">Ligase</keyword>
<keyword id="KW-0547">Nucleotide-binding</keyword>
<keyword id="KW-0648">Protein biosynthesis</keyword>
<comment type="function">
    <text evidence="1">Catalyzes the attachment of glutamate to tRNA(Glu) in a two-step reaction: glutamate is first activated by ATP to form Glu-AMP and then transferred to the acceptor end of tRNA(Glu).</text>
</comment>
<comment type="catalytic activity">
    <reaction evidence="1">
        <text>tRNA(Glu) + L-glutamate + ATP = L-glutamyl-tRNA(Glu) + AMP + diphosphate</text>
        <dbReference type="Rhea" id="RHEA:23540"/>
        <dbReference type="Rhea" id="RHEA-COMP:9663"/>
        <dbReference type="Rhea" id="RHEA-COMP:9680"/>
        <dbReference type="ChEBI" id="CHEBI:29985"/>
        <dbReference type="ChEBI" id="CHEBI:30616"/>
        <dbReference type="ChEBI" id="CHEBI:33019"/>
        <dbReference type="ChEBI" id="CHEBI:78442"/>
        <dbReference type="ChEBI" id="CHEBI:78520"/>
        <dbReference type="ChEBI" id="CHEBI:456215"/>
        <dbReference type="EC" id="6.1.1.17"/>
    </reaction>
</comment>
<comment type="subunit">
    <text evidence="1">Monomer.</text>
</comment>
<comment type="subcellular location">
    <subcellularLocation>
        <location evidence="1">Cytoplasm</location>
    </subcellularLocation>
</comment>
<comment type="similarity">
    <text evidence="1">Belongs to the class-I aminoacyl-tRNA synthetase family. Glutamate--tRNA ligase type 1 subfamily.</text>
</comment>
<dbReference type="EC" id="6.1.1.17" evidence="1"/>
<dbReference type="EMBL" id="BA000034">
    <property type="protein sequence ID" value="BAC63272.1"/>
    <property type="molecule type" value="Genomic_DNA"/>
</dbReference>
<dbReference type="RefSeq" id="WP_011054161.1">
    <property type="nucleotide sequence ID" value="NC_004606.1"/>
</dbReference>
<dbReference type="SMR" id="P0DG35"/>
<dbReference type="KEGG" id="sps:SPs0177"/>
<dbReference type="HOGENOM" id="CLU_015768_6_1_9"/>
<dbReference type="GO" id="GO:0005829">
    <property type="term" value="C:cytosol"/>
    <property type="evidence" value="ECO:0007669"/>
    <property type="project" value="TreeGrafter"/>
</dbReference>
<dbReference type="GO" id="GO:0005524">
    <property type="term" value="F:ATP binding"/>
    <property type="evidence" value="ECO:0007669"/>
    <property type="project" value="UniProtKB-UniRule"/>
</dbReference>
<dbReference type="GO" id="GO:0004818">
    <property type="term" value="F:glutamate-tRNA ligase activity"/>
    <property type="evidence" value="ECO:0007669"/>
    <property type="project" value="UniProtKB-UniRule"/>
</dbReference>
<dbReference type="GO" id="GO:0000049">
    <property type="term" value="F:tRNA binding"/>
    <property type="evidence" value="ECO:0007669"/>
    <property type="project" value="InterPro"/>
</dbReference>
<dbReference type="GO" id="GO:0008270">
    <property type="term" value="F:zinc ion binding"/>
    <property type="evidence" value="ECO:0007669"/>
    <property type="project" value="InterPro"/>
</dbReference>
<dbReference type="GO" id="GO:0006424">
    <property type="term" value="P:glutamyl-tRNA aminoacylation"/>
    <property type="evidence" value="ECO:0007669"/>
    <property type="project" value="UniProtKB-UniRule"/>
</dbReference>
<dbReference type="CDD" id="cd00808">
    <property type="entry name" value="GluRS_core"/>
    <property type="match status" value="1"/>
</dbReference>
<dbReference type="FunFam" id="1.10.10.350:FF:000002">
    <property type="entry name" value="Glutamate--tRNA ligase"/>
    <property type="match status" value="1"/>
</dbReference>
<dbReference type="FunFam" id="3.40.50.620:FF:000007">
    <property type="entry name" value="Glutamate--tRNA ligase"/>
    <property type="match status" value="1"/>
</dbReference>
<dbReference type="Gene3D" id="1.10.10.350">
    <property type="match status" value="1"/>
</dbReference>
<dbReference type="Gene3D" id="3.40.50.620">
    <property type="entry name" value="HUPs"/>
    <property type="match status" value="1"/>
</dbReference>
<dbReference type="HAMAP" id="MF_00022">
    <property type="entry name" value="Glu_tRNA_synth_type1"/>
    <property type="match status" value="1"/>
</dbReference>
<dbReference type="InterPro" id="IPR045462">
    <property type="entry name" value="aa-tRNA-synth_I_cd-bd"/>
</dbReference>
<dbReference type="InterPro" id="IPR020751">
    <property type="entry name" value="aa-tRNA-synth_I_codon-bd_sub2"/>
</dbReference>
<dbReference type="InterPro" id="IPR001412">
    <property type="entry name" value="aa-tRNA-synth_I_CS"/>
</dbReference>
<dbReference type="InterPro" id="IPR008925">
    <property type="entry name" value="aa_tRNA-synth_I_cd-bd_sf"/>
</dbReference>
<dbReference type="InterPro" id="IPR004527">
    <property type="entry name" value="Glu-tRNA-ligase_bac/mito"/>
</dbReference>
<dbReference type="InterPro" id="IPR000924">
    <property type="entry name" value="Glu/Gln-tRNA-synth"/>
</dbReference>
<dbReference type="InterPro" id="IPR020058">
    <property type="entry name" value="Glu/Gln-tRNA-synth_Ib_cat-dom"/>
</dbReference>
<dbReference type="InterPro" id="IPR049940">
    <property type="entry name" value="GluQ/Sye"/>
</dbReference>
<dbReference type="InterPro" id="IPR033910">
    <property type="entry name" value="GluRS_core"/>
</dbReference>
<dbReference type="InterPro" id="IPR014729">
    <property type="entry name" value="Rossmann-like_a/b/a_fold"/>
</dbReference>
<dbReference type="NCBIfam" id="TIGR00464">
    <property type="entry name" value="gltX_bact"/>
    <property type="match status" value="1"/>
</dbReference>
<dbReference type="PANTHER" id="PTHR43311">
    <property type="entry name" value="GLUTAMATE--TRNA LIGASE"/>
    <property type="match status" value="1"/>
</dbReference>
<dbReference type="PANTHER" id="PTHR43311:SF2">
    <property type="entry name" value="GLUTAMATE--TRNA LIGASE, MITOCHONDRIAL-RELATED"/>
    <property type="match status" value="1"/>
</dbReference>
<dbReference type="Pfam" id="PF19269">
    <property type="entry name" value="Anticodon_2"/>
    <property type="match status" value="1"/>
</dbReference>
<dbReference type="Pfam" id="PF00749">
    <property type="entry name" value="tRNA-synt_1c"/>
    <property type="match status" value="1"/>
</dbReference>
<dbReference type="PRINTS" id="PR00987">
    <property type="entry name" value="TRNASYNTHGLU"/>
</dbReference>
<dbReference type="SUPFAM" id="SSF48163">
    <property type="entry name" value="An anticodon-binding domain of class I aminoacyl-tRNA synthetases"/>
    <property type="match status" value="1"/>
</dbReference>
<dbReference type="SUPFAM" id="SSF52374">
    <property type="entry name" value="Nucleotidylyl transferase"/>
    <property type="match status" value="1"/>
</dbReference>
<dbReference type="PROSITE" id="PS00178">
    <property type="entry name" value="AA_TRNA_LIGASE_I"/>
    <property type="match status" value="1"/>
</dbReference>
<gene>
    <name evidence="1" type="primary">gltX</name>
    <name type="synonym">gluS</name>
    <name type="ordered locus">SPs0177</name>
</gene>
<accession>P0DG35</accession>
<accession>Q8K8P9</accession>